<name>CH10_PSEAE</name>
<dbReference type="EMBL" id="M63957">
    <property type="protein sequence ID" value="AAA25829.1"/>
    <property type="molecule type" value="Genomic_DNA"/>
</dbReference>
<dbReference type="EMBL" id="S77424">
    <property type="protein sequence ID" value="AAB34345.1"/>
    <property type="molecule type" value="Genomic_DNA"/>
</dbReference>
<dbReference type="EMBL" id="AE004091">
    <property type="protein sequence ID" value="AAG07774.1"/>
    <property type="molecule type" value="Genomic_DNA"/>
</dbReference>
<dbReference type="PIR" id="A43606">
    <property type="entry name" value="A43606"/>
</dbReference>
<dbReference type="RefSeq" id="NP_253076.1">
    <property type="nucleotide sequence ID" value="NC_002516.2"/>
</dbReference>
<dbReference type="RefSeq" id="WP_003094064.1">
    <property type="nucleotide sequence ID" value="NZ_QZGE01000004.1"/>
</dbReference>
<dbReference type="SMR" id="P30720"/>
<dbReference type="FunCoup" id="P30720">
    <property type="interactions" value="726"/>
</dbReference>
<dbReference type="STRING" id="208964.PA4386"/>
<dbReference type="PaxDb" id="208964-PA4386"/>
<dbReference type="DNASU" id="881349"/>
<dbReference type="GeneID" id="881349"/>
<dbReference type="KEGG" id="pae:PA4386"/>
<dbReference type="PATRIC" id="fig|208964.12.peg.4594"/>
<dbReference type="PseudoCAP" id="PA4386"/>
<dbReference type="HOGENOM" id="CLU_132825_2_0_6"/>
<dbReference type="InParanoid" id="P30720"/>
<dbReference type="OrthoDB" id="9806791at2"/>
<dbReference type="PhylomeDB" id="P30720"/>
<dbReference type="BioCyc" id="PAER208964:G1FZ6-4472-MONOMER"/>
<dbReference type="Proteomes" id="UP000002438">
    <property type="component" value="Chromosome"/>
</dbReference>
<dbReference type="GO" id="GO:0005737">
    <property type="term" value="C:cytoplasm"/>
    <property type="evidence" value="ECO:0007669"/>
    <property type="project" value="UniProtKB-SubCell"/>
</dbReference>
<dbReference type="GO" id="GO:0005524">
    <property type="term" value="F:ATP binding"/>
    <property type="evidence" value="ECO:0007669"/>
    <property type="project" value="InterPro"/>
</dbReference>
<dbReference type="GO" id="GO:0046872">
    <property type="term" value="F:metal ion binding"/>
    <property type="evidence" value="ECO:0000318"/>
    <property type="project" value="GO_Central"/>
</dbReference>
<dbReference type="GO" id="GO:0044183">
    <property type="term" value="F:protein folding chaperone"/>
    <property type="evidence" value="ECO:0007669"/>
    <property type="project" value="InterPro"/>
</dbReference>
<dbReference type="GO" id="GO:0051087">
    <property type="term" value="F:protein-folding chaperone binding"/>
    <property type="evidence" value="ECO:0000318"/>
    <property type="project" value="GO_Central"/>
</dbReference>
<dbReference type="GO" id="GO:0051082">
    <property type="term" value="F:unfolded protein binding"/>
    <property type="evidence" value="ECO:0000318"/>
    <property type="project" value="GO_Central"/>
</dbReference>
<dbReference type="GO" id="GO:0051085">
    <property type="term" value="P:chaperone cofactor-dependent protein refolding"/>
    <property type="evidence" value="ECO:0000318"/>
    <property type="project" value="GO_Central"/>
</dbReference>
<dbReference type="CDD" id="cd00320">
    <property type="entry name" value="cpn10"/>
    <property type="match status" value="1"/>
</dbReference>
<dbReference type="FunFam" id="2.30.33.40:FF:000001">
    <property type="entry name" value="10 kDa chaperonin"/>
    <property type="match status" value="1"/>
</dbReference>
<dbReference type="Gene3D" id="2.30.33.40">
    <property type="entry name" value="GroES chaperonin"/>
    <property type="match status" value="1"/>
</dbReference>
<dbReference type="HAMAP" id="MF_00580">
    <property type="entry name" value="CH10"/>
    <property type="match status" value="1"/>
</dbReference>
<dbReference type="InterPro" id="IPR020818">
    <property type="entry name" value="Chaperonin_GroES"/>
</dbReference>
<dbReference type="InterPro" id="IPR037124">
    <property type="entry name" value="Chaperonin_GroES_sf"/>
</dbReference>
<dbReference type="InterPro" id="IPR018369">
    <property type="entry name" value="Chaprnonin_Cpn10_CS"/>
</dbReference>
<dbReference type="InterPro" id="IPR011032">
    <property type="entry name" value="GroES-like_sf"/>
</dbReference>
<dbReference type="NCBIfam" id="NF001526">
    <property type="entry name" value="PRK00364.1-1"/>
    <property type="match status" value="1"/>
</dbReference>
<dbReference type="NCBIfam" id="NF001527">
    <property type="entry name" value="PRK00364.1-2"/>
    <property type="match status" value="1"/>
</dbReference>
<dbReference type="NCBIfam" id="NF001531">
    <property type="entry name" value="PRK00364.2-2"/>
    <property type="match status" value="1"/>
</dbReference>
<dbReference type="NCBIfam" id="NF001533">
    <property type="entry name" value="PRK00364.2-4"/>
    <property type="match status" value="1"/>
</dbReference>
<dbReference type="PANTHER" id="PTHR10772">
    <property type="entry name" value="10 KDA HEAT SHOCK PROTEIN"/>
    <property type="match status" value="1"/>
</dbReference>
<dbReference type="PANTHER" id="PTHR10772:SF58">
    <property type="entry name" value="CO-CHAPERONIN GROES"/>
    <property type="match status" value="1"/>
</dbReference>
<dbReference type="Pfam" id="PF00166">
    <property type="entry name" value="Cpn10"/>
    <property type="match status" value="1"/>
</dbReference>
<dbReference type="PRINTS" id="PR00297">
    <property type="entry name" value="CHAPERONIN10"/>
</dbReference>
<dbReference type="SMART" id="SM00883">
    <property type="entry name" value="Cpn10"/>
    <property type="match status" value="1"/>
</dbReference>
<dbReference type="SUPFAM" id="SSF50129">
    <property type="entry name" value="GroES-like"/>
    <property type="match status" value="1"/>
</dbReference>
<dbReference type="PROSITE" id="PS00681">
    <property type="entry name" value="CHAPERONINS_CPN10"/>
    <property type="match status" value="1"/>
</dbReference>
<proteinExistence type="inferred from homology"/>
<sequence>MKLRPLHDRVVIRRSEEETKTAGGIVLPGSAAEKPNRGEVVAVGTGRVLDNGEVRALAVKVGDKVVFGPYSGSNAIKVDGEELLVMGESEILAVLED</sequence>
<accession>P30720</accession>
<gene>
    <name evidence="1" type="primary">groES</name>
    <name evidence="1" type="synonym">groS</name>
    <name type="synonym">mopB</name>
    <name type="ordered locus">PA4386</name>
</gene>
<keyword id="KW-0143">Chaperone</keyword>
<keyword id="KW-0963">Cytoplasm</keyword>
<keyword id="KW-1185">Reference proteome</keyword>
<protein>
    <recommendedName>
        <fullName evidence="1">Co-chaperonin GroES</fullName>
    </recommendedName>
    <alternativeName>
        <fullName evidence="1">10 kDa chaperonin</fullName>
    </alternativeName>
    <alternativeName>
        <fullName evidence="1">Chaperonin-10</fullName>
        <shortName evidence="1">Cpn10</shortName>
    </alternativeName>
</protein>
<evidence type="ECO:0000255" key="1">
    <source>
        <dbReference type="HAMAP-Rule" id="MF_00580"/>
    </source>
</evidence>
<evidence type="ECO:0000305" key="2"/>
<reference key="1">
    <citation type="journal article" date="1991" name="Infect. Immun.">
        <title>Cloning and sequencing of the genes coding for the 10- and 60-kDa heat shock proteins from Pseudomonas aeruginosa and mapping of a species-specific epitope.</title>
        <authorList>
            <person name="Sipos A."/>
            <person name="Klocke M."/>
            <person name="Frosch M."/>
        </authorList>
    </citation>
    <scope>NUCLEOTIDE SEQUENCE [GENOMIC DNA]</scope>
</reference>
<reference key="2">
    <citation type="journal article" date="1995" name="APMIS">
        <title>Cloning and nucleotide sequence comparison of the groE operon of Pseudomonas aeruginosa and Burkholderia cepacia.</title>
        <authorList>
            <person name="Jensen P."/>
            <person name="Fomsgaard A."/>
            <person name="Hoiby N."/>
            <person name="Hindersson P."/>
        </authorList>
    </citation>
    <scope>NUCLEOTIDE SEQUENCE [GENOMIC DNA]</scope>
    <source>
        <strain>P1118 / O:3</strain>
    </source>
</reference>
<reference key="3">
    <citation type="journal article" date="2000" name="Nature">
        <title>Complete genome sequence of Pseudomonas aeruginosa PAO1, an opportunistic pathogen.</title>
        <authorList>
            <person name="Stover C.K."/>
            <person name="Pham X.-Q.T."/>
            <person name="Erwin A.L."/>
            <person name="Mizoguchi S.D."/>
            <person name="Warrener P."/>
            <person name="Hickey M.J."/>
            <person name="Brinkman F.S.L."/>
            <person name="Hufnagle W.O."/>
            <person name="Kowalik D.J."/>
            <person name="Lagrou M."/>
            <person name="Garber R.L."/>
            <person name="Goltry L."/>
            <person name="Tolentino E."/>
            <person name="Westbrock-Wadman S."/>
            <person name="Yuan Y."/>
            <person name="Brody L.L."/>
            <person name="Coulter S.N."/>
            <person name="Folger K.R."/>
            <person name="Kas A."/>
            <person name="Larbig K."/>
            <person name="Lim R.M."/>
            <person name="Smith K.A."/>
            <person name="Spencer D.H."/>
            <person name="Wong G.K.-S."/>
            <person name="Wu Z."/>
            <person name="Paulsen I.T."/>
            <person name="Reizer J."/>
            <person name="Saier M.H. Jr."/>
            <person name="Hancock R.E.W."/>
            <person name="Lory S."/>
            <person name="Olson M.V."/>
        </authorList>
    </citation>
    <scope>NUCLEOTIDE SEQUENCE [LARGE SCALE GENOMIC DNA]</scope>
    <source>
        <strain>ATCC 15692 / DSM 22644 / CIP 104116 / JCM 14847 / LMG 12228 / 1C / PRS 101 / PAO1</strain>
    </source>
</reference>
<comment type="function">
    <text evidence="1">Together with the chaperonin GroEL, plays an essential role in assisting protein folding. The GroEL-GroES system forms a nano-cage that allows encapsulation of the non-native substrate proteins and provides a physical environment optimized to promote and accelerate protein folding. GroES binds to the apical surface of the GroEL ring, thereby capping the opening of the GroEL channel.</text>
</comment>
<comment type="subunit">
    <text evidence="1">Heptamer of 7 subunits arranged in a ring. Interacts with the chaperonin GroEL.</text>
</comment>
<comment type="subcellular location">
    <subcellularLocation>
        <location evidence="1">Cytoplasm</location>
    </subcellularLocation>
</comment>
<comment type="similarity">
    <text evidence="1 2">Belongs to the GroES chaperonin family.</text>
</comment>
<organism>
    <name type="scientific">Pseudomonas aeruginosa (strain ATCC 15692 / DSM 22644 / CIP 104116 / JCM 14847 / LMG 12228 / 1C / PRS 101 / PAO1)</name>
    <dbReference type="NCBI Taxonomy" id="208964"/>
    <lineage>
        <taxon>Bacteria</taxon>
        <taxon>Pseudomonadati</taxon>
        <taxon>Pseudomonadota</taxon>
        <taxon>Gammaproteobacteria</taxon>
        <taxon>Pseudomonadales</taxon>
        <taxon>Pseudomonadaceae</taxon>
        <taxon>Pseudomonas</taxon>
    </lineage>
</organism>
<feature type="chain" id="PRO_0000174806" description="Co-chaperonin GroES">
    <location>
        <begin position="1"/>
        <end position="97"/>
    </location>
</feature>